<comment type="subcellular location">
    <subcellularLocation>
        <location evidence="2">Cell membrane</location>
        <topology evidence="2">Multi-pass membrane protein</topology>
    </subcellularLocation>
</comment>
<proteinExistence type="predicted"/>
<keyword id="KW-1003">Cell membrane</keyword>
<keyword id="KW-0472">Membrane</keyword>
<keyword id="KW-1185">Reference proteome</keyword>
<keyword id="KW-0812">Transmembrane</keyword>
<keyword id="KW-1133">Transmembrane helix</keyword>
<sequence>MVNMAPNTNFASLVAVAGCVLLGYNYYTGNIFCGVIGSLLLFGALWSLNGGKIWGIISFIISASIFCYINWDFILNLLFYSIIAFIVMSILILIFGNNRGGYYY</sequence>
<name>Y1219_METJA</name>
<gene>
    <name type="ordered locus">MJ1219</name>
</gene>
<feature type="chain" id="PRO_0000107221" description="Uncharacterized protein MJ1219">
    <location>
        <begin position="1"/>
        <end position="104"/>
    </location>
</feature>
<feature type="transmembrane region" description="Helical" evidence="1">
    <location>
        <begin position="53"/>
        <end position="73"/>
    </location>
</feature>
<feature type="transmembrane region" description="Helical" evidence="1">
    <location>
        <begin position="74"/>
        <end position="94"/>
    </location>
</feature>
<reference key="1">
    <citation type="journal article" date="1996" name="Science">
        <title>Complete genome sequence of the methanogenic archaeon, Methanococcus jannaschii.</title>
        <authorList>
            <person name="Bult C.J."/>
            <person name="White O."/>
            <person name="Olsen G.J."/>
            <person name="Zhou L."/>
            <person name="Fleischmann R.D."/>
            <person name="Sutton G.G."/>
            <person name="Blake J.A."/>
            <person name="FitzGerald L.M."/>
            <person name="Clayton R.A."/>
            <person name="Gocayne J.D."/>
            <person name="Kerlavage A.R."/>
            <person name="Dougherty B.A."/>
            <person name="Tomb J.-F."/>
            <person name="Adams M.D."/>
            <person name="Reich C.I."/>
            <person name="Overbeek R."/>
            <person name="Kirkness E.F."/>
            <person name="Weinstock K.G."/>
            <person name="Merrick J.M."/>
            <person name="Glodek A."/>
            <person name="Scott J.L."/>
            <person name="Geoghagen N.S.M."/>
            <person name="Weidman J.F."/>
            <person name="Fuhrmann J.L."/>
            <person name="Nguyen D."/>
            <person name="Utterback T.R."/>
            <person name="Kelley J.M."/>
            <person name="Peterson J.D."/>
            <person name="Sadow P.W."/>
            <person name="Hanna M.C."/>
            <person name="Cotton M.D."/>
            <person name="Roberts K.M."/>
            <person name="Hurst M.A."/>
            <person name="Kaine B.P."/>
            <person name="Borodovsky M."/>
            <person name="Klenk H.-P."/>
            <person name="Fraser C.M."/>
            <person name="Smith H.O."/>
            <person name="Woese C.R."/>
            <person name="Venter J.C."/>
        </authorList>
    </citation>
    <scope>NUCLEOTIDE SEQUENCE [LARGE SCALE GENOMIC DNA]</scope>
    <source>
        <strain>ATCC 43067 / DSM 2661 / JAL-1 / JCM 10045 / NBRC 100440</strain>
    </source>
</reference>
<accession>Q58616</accession>
<dbReference type="EMBL" id="L77117">
    <property type="protein sequence ID" value="AAB99224.1"/>
    <property type="molecule type" value="Genomic_DNA"/>
</dbReference>
<dbReference type="PIR" id="B64452">
    <property type="entry name" value="B64452"/>
</dbReference>
<dbReference type="STRING" id="243232.MJ_1219"/>
<dbReference type="PaxDb" id="243232-MJ_1219"/>
<dbReference type="EnsemblBacteria" id="AAB99224">
    <property type="protein sequence ID" value="AAB99224"/>
    <property type="gene ID" value="MJ_1219"/>
</dbReference>
<dbReference type="KEGG" id="mja:MJ_1219"/>
<dbReference type="HOGENOM" id="CLU_2243864_0_0_2"/>
<dbReference type="InParanoid" id="Q58616"/>
<dbReference type="Proteomes" id="UP000000805">
    <property type="component" value="Chromosome"/>
</dbReference>
<dbReference type="GO" id="GO:0005886">
    <property type="term" value="C:plasma membrane"/>
    <property type="evidence" value="ECO:0007669"/>
    <property type="project" value="UniProtKB-SubCell"/>
</dbReference>
<organism>
    <name type="scientific">Methanocaldococcus jannaschii (strain ATCC 43067 / DSM 2661 / JAL-1 / JCM 10045 / NBRC 100440)</name>
    <name type="common">Methanococcus jannaschii</name>
    <dbReference type="NCBI Taxonomy" id="243232"/>
    <lineage>
        <taxon>Archaea</taxon>
        <taxon>Methanobacteriati</taxon>
        <taxon>Methanobacteriota</taxon>
        <taxon>Methanomada group</taxon>
        <taxon>Methanococci</taxon>
        <taxon>Methanococcales</taxon>
        <taxon>Methanocaldococcaceae</taxon>
        <taxon>Methanocaldococcus</taxon>
    </lineage>
</organism>
<protein>
    <recommendedName>
        <fullName>Uncharacterized protein MJ1219</fullName>
    </recommendedName>
</protein>
<evidence type="ECO:0000255" key="1"/>
<evidence type="ECO:0000305" key="2"/>